<keyword id="KW-0687">Ribonucleoprotein</keyword>
<keyword id="KW-0689">Ribosomal protein</keyword>
<evidence type="ECO:0000255" key="1">
    <source>
        <dbReference type="HAMAP-Rule" id="MF_00373"/>
    </source>
</evidence>
<evidence type="ECO:0000256" key="2">
    <source>
        <dbReference type="SAM" id="MobiDB-lite"/>
    </source>
</evidence>
<evidence type="ECO:0000305" key="3"/>
<feature type="chain" id="PRO_1000007404" description="Large ribosomal subunit protein bL28">
    <location>
        <begin position="1"/>
        <end position="78"/>
    </location>
</feature>
<feature type="region of interest" description="Disordered" evidence="2">
    <location>
        <begin position="1"/>
        <end position="21"/>
    </location>
</feature>
<protein>
    <recommendedName>
        <fullName evidence="1">Large ribosomal subunit protein bL28</fullName>
    </recommendedName>
    <alternativeName>
        <fullName evidence="3">50S ribosomal protein L28</fullName>
    </alternativeName>
</protein>
<accession>A1JHR2</accession>
<comment type="similarity">
    <text evidence="1">Belongs to the bacterial ribosomal protein bL28 family.</text>
</comment>
<sequence>MSRVCQVTGKRPVSGNNRSHAMNATKRRFLPNLHSHRFWVEGEKRFVTLRVSAKGMRVIDKKGIETVLAEIRARGEKY</sequence>
<proteinExistence type="inferred from homology"/>
<dbReference type="EMBL" id="AM286415">
    <property type="protein sequence ID" value="CAL10206.1"/>
    <property type="molecule type" value="Genomic_DNA"/>
</dbReference>
<dbReference type="RefSeq" id="WP_005164747.1">
    <property type="nucleotide sequence ID" value="NC_008800.1"/>
</dbReference>
<dbReference type="RefSeq" id="YP_001004458.1">
    <property type="nucleotide sequence ID" value="NC_008800.1"/>
</dbReference>
<dbReference type="SMR" id="A1JHR2"/>
<dbReference type="GeneID" id="97458293"/>
<dbReference type="KEGG" id="yen:YE0064"/>
<dbReference type="PATRIC" id="fig|393305.7.peg.153"/>
<dbReference type="eggNOG" id="COG0227">
    <property type="taxonomic scope" value="Bacteria"/>
</dbReference>
<dbReference type="HOGENOM" id="CLU_064548_3_1_6"/>
<dbReference type="OrthoDB" id="9805609at2"/>
<dbReference type="Proteomes" id="UP000000642">
    <property type="component" value="Chromosome"/>
</dbReference>
<dbReference type="GO" id="GO:1990904">
    <property type="term" value="C:ribonucleoprotein complex"/>
    <property type="evidence" value="ECO:0007669"/>
    <property type="project" value="UniProtKB-KW"/>
</dbReference>
<dbReference type="GO" id="GO:0005840">
    <property type="term" value="C:ribosome"/>
    <property type="evidence" value="ECO:0007669"/>
    <property type="project" value="UniProtKB-KW"/>
</dbReference>
<dbReference type="GO" id="GO:0003735">
    <property type="term" value="F:structural constituent of ribosome"/>
    <property type="evidence" value="ECO:0007669"/>
    <property type="project" value="InterPro"/>
</dbReference>
<dbReference type="GO" id="GO:0006412">
    <property type="term" value="P:translation"/>
    <property type="evidence" value="ECO:0007669"/>
    <property type="project" value="UniProtKB-UniRule"/>
</dbReference>
<dbReference type="FunFam" id="2.30.170.40:FF:000001">
    <property type="entry name" value="50S ribosomal protein L28"/>
    <property type="match status" value="1"/>
</dbReference>
<dbReference type="Gene3D" id="2.30.170.40">
    <property type="entry name" value="Ribosomal protein L28/L24"/>
    <property type="match status" value="1"/>
</dbReference>
<dbReference type="HAMAP" id="MF_00373">
    <property type="entry name" value="Ribosomal_bL28"/>
    <property type="match status" value="1"/>
</dbReference>
<dbReference type="InterPro" id="IPR050096">
    <property type="entry name" value="Bacterial_rp_bL28"/>
</dbReference>
<dbReference type="InterPro" id="IPR026569">
    <property type="entry name" value="Ribosomal_bL28"/>
</dbReference>
<dbReference type="InterPro" id="IPR034704">
    <property type="entry name" value="Ribosomal_bL28/bL31-like_sf"/>
</dbReference>
<dbReference type="InterPro" id="IPR001383">
    <property type="entry name" value="Ribosomal_bL28_bact-type"/>
</dbReference>
<dbReference type="InterPro" id="IPR037147">
    <property type="entry name" value="Ribosomal_bL28_sf"/>
</dbReference>
<dbReference type="NCBIfam" id="TIGR00009">
    <property type="entry name" value="L28"/>
    <property type="match status" value="1"/>
</dbReference>
<dbReference type="PANTHER" id="PTHR39080">
    <property type="entry name" value="50S RIBOSOMAL PROTEIN L28"/>
    <property type="match status" value="1"/>
</dbReference>
<dbReference type="PANTHER" id="PTHR39080:SF1">
    <property type="entry name" value="LARGE RIBOSOMAL SUBUNIT PROTEIN BL28A"/>
    <property type="match status" value="1"/>
</dbReference>
<dbReference type="Pfam" id="PF00830">
    <property type="entry name" value="Ribosomal_L28"/>
    <property type="match status" value="1"/>
</dbReference>
<dbReference type="SUPFAM" id="SSF143800">
    <property type="entry name" value="L28p-like"/>
    <property type="match status" value="1"/>
</dbReference>
<organism>
    <name type="scientific">Yersinia enterocolitica serotype O:8 / biotype 1B (strain NCTC 13174 / 8081)</name>
    <dbReference type="NCBI Taxonomy" id="393305"/>
    <lineage>
        <taxon>Bacteria</taxon>
        <taxon>Pseudomonadati</taxon>
        <taxon>Pseudomonadota</taxon>
        <taxon>Gammaproteobacteria</taxon>
        <taxon>Enterobacterales</taxon>
        <taxon>Yersiniaceae</taxon>
        <taxon>Yersinia</taxon>
    </lineage>
</organism>
<gene>
    <name evidence="1" type="primary">rpmB</name>
    <name type="ordered locus">YE0064</name>
</gene>
<reference key="1">
    <citation type="journal article" date="2006" name="PLoS Genet.">
        <title>The complete genome sequence and comparative genome analysis of the high pathogenicity Yersinia enterocolitica strain 8081.</title>
        <authorList>
            <person name="Thomson N.R."/>
            <person name="Howard S."/>
            <person name="Wren B.W."/>
            <person name="Holden M.T.G."/>
            <person name="Crossman L."/>
            <person name="Challis G.L."/>
            <person name="Churcher C."/>
            <person name="Mungall K."/>
            <person name="Brooks K."/>
            <person name="Chillingworth T."/>
            <person name="Feltwell T."/>
            <person name="Abdellah Z."/>
            <person name="Hauser H."/>
            <person name="Jagels K."/>
            <person name="Maddison M."/>
            <person name="Moule S."/>
            <person name="Sanders M."/>
            <person name="Whitehead S."/>
            <person name="Quail M.A."/>
            <person name="Dougan G."/>
            <person name="Parkhill J."/>
            <person name="Prentice M.B."/>
        </authorList>
    </citation>
    <scope>NUCLEOTIDE SEQUENCE [LARGE SCALE GENOMIC DNA]</scope>
    <source>
        <strain>NCTC 13174 / 8081</strain>
    </source>
</reference>
<name>RL28_YERE8</name>